<proteinExistence type="predicted"/>
<accession>Q9P7D1</accession>
<name>YOFI_SCHPO</name>
<reference key="1">
    <citation type="journal article" date="2002" name="Nature">
        <title>The genome sequence of Schizosaccharomyces pombe.</title>
        <authorList>
            <person name="Wood V."/>
            <person name="Gwilliam R."/>
            <person name="Rajandream M.A."/>
            <person name="Lyne M.H."/>
            <person name="Lyne R."/>
            <person name="Stewart A."/>
            <person name="Sgouros J.G."/>
            <person name="Peat N."/>
            <person name="Hayles J."/>
            <person name="Baker S.G."/>
            <person name="Basham D."/>
            <person name="Bowman S."/>
            <person name="Brooks K."/>
            <person name="Brown D."/>
            <person name="Brown S."/>
            <person name="Chillingworth T."/>
            <person name="Churcher C.M."/>
            <person name="Collins M."/>
            <person name="Connor R."/>
            <person name="Cronin A."/>
            <person name="Davis P."/>
            <person name="Feltwell T."/>
            <person name="Fraser A."/>
            <person name="Gentles S."/>
            <person name="Goble A."/>
            <person name="Hamlin N."/>
            <person name="Harris D.E."/>
            <person name="Hidalgo J."/>
            <person name="Hodgson G."/>
            <person name="Holroyd S."/>
            <person name="Hornsby T."/>
            <person name="Howarth S."/>
            <person name="Huckle E.J."/>
            <person name="Hunt S."/>
            <person name="Jagels K."/>
            <person name="James K.D."/>
            <person name="Jones L."/>
            <person name="Jones M."/>
            <person name="Leather S."/>
            <person name="McDonald S."/>
            <person name="McLean J."/>
            <person name="Mooney P."/>
            <person name="Moule S."/>
            <person name="Mungall K.L."/>
            <person name="Murphy L.D."/>
            <person name="Niblett D."/>
            <person name="Odell C."/>
            <person name="Oliver K."/>
            <person name="O'Neil S."/>
            <person name="Pearson D."/>
            <person name="Quail M.A."/>
            <person name="Rabbinowitsch E."/>
            <person name="Rutherford K.M."/>
            <person name="Rutter S."/>
            <person name="Saunders D."/>
            <person name="Seeger K."/>
            <person name="Sharp S."/>
            <person name="Skelton J."/>
            <person name="Simmonds M.N."/>
            <person name="Squares R."/>
            <person name="Squares S."/>
            <person name="Stevens K."/>
            <person name="Taylor K."/>
            <person name="Taylor R.G."/>
            <person name="Tivey A."/>
            <person name="Walsh S.V."/>
            <person name="Warren T."/>
            <person name="Whitehead S."/>
            <person name="Woodward J.R."/>
            <person name="Volckaert G."/>
            <person name="Aert R."/>
            <person name="Robben J."/>
            <person name="Grymonprez B."/>
            <person name="Weltjens I."/>
            <person name="Vanstreels E."/>
            <person name="Rieger M."/>
            <person name="Schaefer M."/>
            <person name="Mueller-Auer S."/>
            <person name="Gabel C."/>
            <person name="Fuchs M."/>
            <person name="Duesterhoeft A."/>
            <person name="Fritzc C."/>
            <person name="Holzer E."/>
            <person name="Moestl D."/>
            <person name="Hilbert H."/>
            <person name="Borzym K."/>
            <person name="Langer I."/>
            <person name="Beck A."/>
            <person name="Lehrach H."/>
            <person name="Reinhardt R."/>
            <person name="Pohl T.M."/>
            <person name="Eger P."/>
            <person name="Zimmermann W."/>
            <person name="Wedler H."/>
            <person name="Wambutt R."/>
            <person name="Purnelle B."/>
            <person name="Goffeau A."/>
            <person name="Cadieu E."/>
            <person name="Dreano S."/>
            <person name="Gloux S."/>
            <person name="Lelaure V."/>
            <person name="Mottier S."/>
            <person name="Galibert F."/>
            <person name="Aves S.J."/>
            <person name="Xiang Z."/>
            <person name="Hunt C."/>
            <person name="Moore K."/>
            <person name="Hurst S.M."/>
            <person name="Lucas M."/>
            <person name="Rochet M."/>
            <person name="Gaillardin C."/>
            <person name="Tallada V.A."/>
            <person name="Garzon A."/>
            <person name="Thode G."/>
            <person name="Daga R.R."/>
            <person name="Cruzado L."/>
            <person name="Jimenez J."/>
            <person name="Sanchez M."/>
            <person name="del Rey F."/>
            <person name="Benito J."/>
            <person name="Dominguez A."/>
            <person name="Revuelta J.L."/>
            <person name="Moreno S."/>
            <person name="Armstrong J."/>
            <person name="Forsburg S.L."/>
            <person name="Cerutti L."/>
            <person name="Lowe T."/>
            <person name="McCombie W.R."/>
            <person name="Paulsen I."/>
            <person name="Potashkin J."/>
            <person name="Shpakovski G.V."/>
            <person name="Ussery D."/>
            <person name="Barrell B.G."/>
            <person name="Nurse P."/>
        </authorList>
    </citation>
    <scope>NUCLEOTIDE SEQUENCE [LARGE SCALE GENOMIC DNA]</scope>
    <source>
        <strain>972 / ATCC 24843</strain>
    </source>
</reference>
<reference key="2">
    <citation type="journal article" date="2006" name="Nat. Biotechnol.">
        <title>ORFeome cloning and global analysis of protein localization in the fission yeast Schizosaccharomyces pombe.</title>
        <authorList>
            <person name="Matsuyama A."/>
            <person name="Arai R."/>
            <person name="Yashiroda Y."/>
            <person name="Shirai A."/>
            <person name="Kamata A."/>
            <person name="Sekido S."/>
            <person name="Kobayashi Y."/>
            <person name="Hashimoto A."/>
            <person name="Hamamoto M."/>
            <person name="Hiraoka Y."/>
            <person name="Horinouchi S."/>
            <person name="Yoshida M."/>
        </authorList>
    </citation>
    <scope>SUBCELLULAR LOCATION [LARGE SCALE ANALYSIS]</scope>
</reference>
<sequence length="314" mass="35880">MVASLIKRAKATSLRSLFQKNEMNFQSIRFNIHQFSTQPALRSEGSELIFGGRSFDSLLSSIKETMEEKKKKSSSFEKRDKRRVQLKEKSPLRTPRNRTQIIDARSTRKDTENESLRKNNFKRRTQFAFTGRATKSNAGVMDVQSPSTMSTSKNNVRNAERPASKKPVFGSKKYFDVINDSNVENKEETKDRNLDRALSKFTQSREKNEQNLSSKASVLRNKKSILLKKRNQDETQLTTEEDFSANNDSTAKIETSIHDHRDISRITPFELPFVNPKLFASFTPMSVALPAGRLLLIKQLQEKSTQSSSMTGLK</sequence>
<gene>
    <name type="ORF">SPBP4H10.18c</name>
</gene>
<organism>
    <name type="scientific">Schizosaccharomyces pombe (strain 972 / ATCC 24843)</name>
    <name type="common">Fission yeast</name>
    <dbReference type="NCBI Taxonomy" id="284812"/>
    <lineage>
        <taxon>Eukaryota</taxon>
        <taxon>Fungi</taxon>
        <taxon>Dikarya</taxon>
        <taxon>Ascomycota</taxon>
        <taxon>Taphrinomycotina</taxon>
        <taxon>Schizosaccharomycetes</taxon>
        <taxon>Schizosaccharomycetales</taxon>
        <taxon>Schizosaccharomycetaceae</taxon>
        <taxon>Schizosaccharomyces</taxon>
    </lineage>
</organism>
<feature type="chain" id="PRO_0000304050" description="Uncharacterized protein P4H10.18c">
    <location>
        <begin position="1"/>
        <end position="314"/>
    </location>
</feature>
<feature type="region of interest" description="Disordered" evidence="1">
    <location>
        <begin position="68"/>
        <end position="97"/>
    </location>
</feature>
<feature type="region of interest" description="Disordered" evidence="1">
    <location>
        <begin position="141"/>
        <end position="164"/>
    </location>
</feature>
<feature type="compositionally biased region" description="Basic and acidic residues" evidence="1">
    <location>
        <begin position="68"/>
        <end position="91"/>
    </location>
</feature>
<feature type="compositionally biased region" description="Polar residues" evidence="1">
    <location>
        <begin position="144"/>
        <end position="157"/>
    </location>
</feature>
<evidence type="ECO:0000256" key="1">
    <source>
        <dbReference type="SAM" id="MobiDB-lite"/>
    </source>
</evidence>
<evidence type="ECO:0000269" key="2">
    <source>
    </source>
</evidence>
<keyword id="KW-0496">Mitochondrion</keyword>
<keyword id="KW-1185">Reference proteome</keyword>
<dbReference type="EMBL" id="CU329671">
    <property type="protein sequence ID" value="CAB83176.1"/>
    <property type="molecule type" value="Genomic_DNA"/>
</dbReference>
<dbReference type="RefSeq" id="NP_596192.1">
    <property type="nucleotide sequence ID" value="NM_001022111.2"/>
</dbReference>
<dbReference type="SMR" id="Q9P7D1"/>
<dbReference type="BioGRID" id="277845">
    <property type="interactions" value="10"/>
</dbReference>
<dbReference type="STRING" id="284812.Q9P7D1"/>
<dbReference type="PaxDb" id="4896-SPBP4H10.18c.1"/>
<dbReference type="EnsemblFungi" id="SPBP4H10.18c.1">
    <property type="protein sequence ID" value="SPBP4H10.18c.1:pep"/>
    <property type="gene ID" value="SPBP4H10.18c"/>
</dbReference>
<dbReference type="KEGG" id="spo:2541334"/>
<dbReference type="PomBase" id="SPBP4H10.18c"/>
<dbReference type="VEuPathDB" id="FungiDB:SPBP4H10.18c"/>
<dbReference type="HOGENOM" id="CLU_886128_0_0_1"/>
<dbReference type="InParanoid" id="Q9P7D1"/>
<dbReference type="PRO" id="PR:Q9P7D1"/>
<dbReference type="Proteomes" id="UP000002485">
    <property type="component" value="Chromosome II"/>
</dbReference>
<dbReference type="GO" id="GO:0005739">
    <property type="term" value="C:mitochondrion"/>
    <property type="evidence" value="ECO:0007005"/>
    <property type="project" value="PomBase"/>
</dbReference>
<comment type="subcellular location">
    <subcellularLocation>
        <location evidence="2">Mitochondrion</location>
    </subcellularLocation>
</comment>
<protein>
    <recommendedName>
        <fullName>Uncharacterized protein P4H10.18c</fullName>
    </recommendedName>
</protein>